<sequence length="251" mass="27334">MLQTMKTLTLIPTRLGSTRLPNKPLADICGKPMIVHVADRAAAAKLGRTVIATDSEEIFKVVAAHGHEAIMTRGDHESGSDRIYEALAKLDPSGEIDAVVNVQGDLPTIDPDTIRRALLPLEDGPADIATLGVEITVEEEKTNPNVVKIVGSPLAGNRRLRALYFTRATAPYGEGPLYHHIGLYAYRRSALERFVKLGPSPLEKREKLEQLRALEAGMRIDVEIVKTVPLGVDTQADLDRARTFCSQAGTI</sequence>
<comment type="function">
    <text evidence="1">Activates KDO (a required 8-carbon sugar) for incorporation into bacterial lipopolysaccharide in Gram-negative bacteria.</text>
</comment>
<comment type="catalytic activity">
    <reaction evidence="1">
        <text>3-deoxy-alpha-D-manno-oct-2-ulosonate + CTP = CMP-3-deoxy-beta-D-manno-octulosonate + diphosphate</text>
        <dbReference type="Rhea" id="RHEA:23448"/>
        <dbReference type="ChEBI" id="CHEBI:33019"/>
        <dbReference type="ChEBI" id="CHEBI:37563"/>
        <dbReference type="ChEBI" id="CHEBI:85986"/>
        <dbReference type="ChEBI" id="CHEBI:85987"/>
        <dbReference type="EC" id="2.7.7.38"/>
    </reaction>
</comment>
<comment type="pathway">
    <text evidence="1">Nucleotide-sugar biosynthesis; CMP-3-deoxy-D-manno-octulosonate biosynthesis; CMP-3-deoxy-D-manno-octulosonate from 3-deoxy-D-manno-octulosonate and CTP: step 1/1.</text>
</comment>
<comment type="pathway">
    <text evidence="1">Bacterial outer membrane biogenesis; lipopolysaccharide biosynthesis.</text>
</comment>
<comment type="subcellular location">
    <subcellularLocation>
        <location evidence="1">Cytoplasm</location>
    </subcellularLocation>
</comment>
<comment type="similarity">
    <text evidence="1">Belongs to the KdsB family.</text>
</comment>
<feature type="chain" id="PRO_0000370014" description="3-deoxy-manno-octulosonate cytidylyltransferase">
    <location>
        <begin position="1"/>
        <end position="251"/>
    </location>
</feature>
<accession>A9M6P3</accession>
<keyword id="KW-0963">Cytoplasm</keyword>
<keyword id="KW-0448">Lipopolysaccharide biosynthesis</keyword>
<keyword id="KW-0548">Nucleotidyltransferase</keyword>
<keyword id="KW-1185">Reference proteome</keyword>
<keyword id="KW-0808">Transferase</keyword>
<organism>
    <name type="scientific">Brucella canis (strain ATCC 23365 / NCTC 10854 / RM-666)</name>
    <dbReference type="NCBI Taxonomy" id="483179"/>
    <lineage>
        <taxon>Bacteria</taxon>
        <taxon>Pseudomonadati</taxon>
        <taxon>Pseudomonadota</taxon>
        <taxon>Alphaproteobacteria</taxon>
        <taxon>Hyphomicrobiales</taxon>
        <taxon>Brucellaceae</taxon>
        <taxon>Brucella/Ochrobactrum group</taxon>
        <taxon>Brucella</taxon>
    </lineage>
</organism>
<dbReference type="EC" id="2.7.7.38" evidence="1"/>
<dbReference type="EMBL" id="CP000872">
    <property type="protein sequence ID" value="ABX61144.1"/>
    <property type="molecule type" value="Genomic_DNA"/>
</dbReference>
<dbReference type="RefSeq" id="WP_006133051.1">
    <property type="nucleotide sequence ID" value="NC_010103.1"/>
</dbReference>
<dbReference type="SMR" id="A9M6P3"/>
<dbReference type="GeneID" id="55589843"/>
<dbReference type="KEGG" id="bcs:BCAN_A0040"/>
<dbReference type="HOGENOM" id="CLU_065038_0_1_5"/>
<dbReference type="PhylomeDB" id="A9M6P3"/>
<dbReference type="UniPathway" id="UPA00030"/>
<dbReference type="UniPathway" id="UPA00358">
    <property type="reaction ID" value="UER00476"/>
</dbReference>
<dbReference type="Proteomes" id="UP000001385">
    <property type="component" value="Chromosome I"/>
</dbReference>
<dbReference type="GO" id="GO:0005829">
    <property type="term" value="C:cytosol"/>
    <property type="evidence" value="ECO:0007669"/>
    <property type="project" value="TreeGrafter"/>
</dbReference>
<dbReference type="GO" id="GO:0008690">
    <property type="term" value="F:3-deoxy-manno-octulosonate cytidylyltransferase activity"/>
    <property type="evidence" value="ECO:0007669"/>
    <property type="project" value="UniProtKB-UniRule"/>
</dbReference>
<dbReference type="GO" id="GO:0033468">
    <property type="term" value="P:CMP-keto-3-deoxy-D-manno-octulosonic acid biosynthetic process"/>
    <property type="evidence" value="ECO:0007669"/>
    <property type="project" value="UniProtKB-UniRule"/>
</dbReference>
<dbReference type="GO" id="GO:0009103">
    <property type="term" value="P:lipopolysaccharide biosynthetic process"/>
    <property type="evidence" value="ECO:0007669"/>
    <property type="project" value="UniProtKB-UniRule"/>
</dbReference>
<dbReference type="CDD" id="cd02517">
    <property type="entry name" value="CMP-KDO-Synthetase"/>
    <property type="match status" value="1"/>
</dbReference>
<dbReference type="Gene3D" id="3.90.550.10">
    <property type="entry name" value="Spore Coat Polysaccharide Biosynthesis Protein SpsA, Chain A"/>
    <property type="match status" value="1"/>
</dbReference>
<dbReference type="HAMAP" id="MF_00057">
    <property type="entry name" value="KdsB"/>
    <property type="match status" value="1"/>
</dbReference>
<dbReference type="InterPro" id="IPR003329">
    <property type="entry name" value="Cytidylyl_trans"/>
</dbReference>
<dbReference type="InterPro" id="IPR004528">
    <property type="entry name" value="KdsB"/>
</dbReference>
<dbReference type="InterPro" id="IPR029044">
    <property type="entry name" value="Nucleotide-diphossugar_trans"/>
</dbReference>
<dbReference type="NCBIfam" id="TIGR00466">
    <property type="entry name" value="kdsB"/>
    <property type="match status" value="1"/>
</dbReference>
<dbReference type="NCBIfam" id="NF003948">
    <property type="entry name" value="PRK05450.1-1"/>
    <property type="match status" value="1"/>
</dbReference>
<dbReference type="NCBIfam" id="NF003952">
    <property type="entry name" value="PRK05450.1-5"/>
    <property type="match status" value="1"/>
</dbReference>
<dbReference type="PANTHER" id="PTHR42866">
    <property type="entry name" value="3-DEOXY-MANNO-OCTULOSONATE CYTIDYLYLTRANSFERASE"/>
    <property type="match status" value="1"/>
</dbReference>
<dbReference type="PANTHER" id="PTHR42866:SF2">
    <property type="entry name" value="3-DEOXY-MANNO-OCTULOSONATE CYTIDYLYLTRANSFERASE, MITOCHONDRIAL"/>
    <property type="match status" value="1"/>
</dbReference>
<dbReference type="Pfam" id="PF02348">
    <property type="entry name" value="CTP_transf_3"/>
    <property type="match status" value="1"/>
</dbReference>
<dbReference type="SUPFAM" id="SSF53448">
    <property type="entry name" value="Nucleotide-diphospho-sugar transferases"/>
    <property type="match status" value="1"/>
</dbReference>
<protein>
    <recommendedName>
        <fullName evidence="1">3-deoxy-manno-octulosonate cytidylyltransferase</fullName>
        <ecNumber evidence="1">2.7.7.38</ecNumber>
    </recommendedName>
    <alternativeName>
        <fullName evidence="1">CMP-2-keto-3-deoxyoctulosonic acid synthase</fullName>
        <shortName evidence="1">CKS</shortName>
        <shortName evidence="1">CMP-KDO synthase</shortName>
    </alternativeName>
</protein>
<reference key="1">
    <citation type="submission" date="2007-10" db="EMBL/GenBank/DDBJ databases">
        <title>Brucella canis ATCC 23365 whole genome shotgun sequencing project.</title>
        <authorList>
            <person name="Setubal J.C."/>
            <person name="Bowns C."/>
            <person name="Boyle S."/>
            <person name="Crasta O.R."/>
            <person name="Czar M.J."/>
            <person name="Dharmanolla C."/>
            <person name="Gillespie J.J."/>
            <person name="Kenyon R.W."/>
            <person name="Lu J."/>
            <person name="Mane S."/>
            <person name="Mohapatra S."/>
            <person name="Nagrani S."/>
            <person name="Purkayastha A."/>
            <person name="Rajasimha H.K."/>
            <person name="Shallom J.M."/>
            <person name="Shallom S."/>
            <person name="Shukla M."/>
            <person name="Snyder E.E."/>
            <person name="Sobral B.W."/>
            <person name="Wattam A.R."/>
            <person name="Will R."/>
            <person name="Williams K."/>
            <person name="Yoo H."/>
            <person name="Bruce D."/>
            <person name="Detter C."/>
            <person name="Munk C."/>
            <person name="Brettin T.S."/>
        </authorList>
    </citation>
    <scope>NUCLEOTIDE SEQUENCE [LARGE SCALE GENOMIC DNA]</scope>
    <source>
        <strain>ATCC 23365 / NCTC 10854 / RM-666</strain>
    </source>
</reference>
<name>KDSB_BRUC2</name>
<evidence type="ECO:0000255" key="1">
    <source>
        <dbReference type="HAMAP-Rule" id="MF_00057"/>
    </source>
</evidence>
<proteinExistence type="inferred from homology"/>
<gene>
    <name evidence="1" type="primary">kdsB</name>
    <name type="ordered locus">BCAN_A0040</name>
</gene>